<accession>O88846</accession>
<reference key="1">
    <citation type="journal article" date="1998" name="Mol. Cell. Biol.">
        <title>Identification of a novel RING finger protein as a coregulator in steroid receptor-mediated gene transcription.</title>
        <authorList>
            <person name="Moilanen A.-M."/>
            <person name="Poukka H."/>
            <person name="Karvonen U."/>
            <person name="Hakli M."/>
            <person name="Janne O.A."/>
            <person name="Palvimo J.J."/>
        </authorList>
    </citation>
    <scope>NUCLEOTIDE SEQUENCE [MRNA]</scope>
    <scope>FUNCTION</scope>
    <scope>TISSUE SPECIFICITY</scope>
    <scope>INTERACTION WITH AR AND TBP</scope>
    <scope>SUBCELLULAR LOCATION</scope>
    <source>
        <tissue>Testis</tissue>
    </source>
</reference>
<reference key="2">
    <citation type="submission" date="2001-08" db="EMBL/GenBank/DDBJ databases">
        <title>Analysis of androgen receptor coregulator SNURF/RNF4 expression in rat testis.</title>
        <authorList>
            <person name="Yan W."/>
            <person name="Hirvonen S.J."/>
            <person name="Moilanen A.-M."/>
            <person name="Janne O.A."/>
            <person name="Palvimo J.J."/>
            <person name="Toppari J."/>
        </authorList>
    </citation>
    <scope>NUCLEOTIDE SEQUENCE [MRNA]</scope>
    <source>
        <strain>Sprague-Dawley</strain>
    </source>
</reference>
<reference key="3">
    <citation type="journal article" date="2004" name="Genome Res.">
        <title>The status, quality, and expansion of the NIH full-length cDNA project: the Mammalian Gene Collection (MGC).</title>
        <authorList>
            <consortium name="The MGC Project Team"/>
        </authorList>
    </citation>
    <scope>NUCLEOTIDE SEQUENCE [LARGE SCALE MRNA]</scope>
    <source>
        <tissue>Prostate</tissue>
    </source>
</reference>
<reference key="4">
    <citation type="journal article" date="2001" name="J. Biol. Chem.">
        <title>The RING finger protein SNURF is a bifunctional protein possessing DNA binding activity.</title>
        <authorList>
            <person name="Haekli M."/>
            <person name="Karvonen U."/>
            <person name="Jaenne O.A."/>
            <person name="Palvimo J.J."/>
        </authorList>
    </citation>
    <scope>FUNCTION</scope>
    <scope>MUTAGENESIS OF 8-ARG--ARG-11</scope>
    <scope>SUBCELLULAR LOCATION</scope>
</reference>
<reference key="5">
    <citation type="journal article" date="2004" name="FEBS Lett.">
        <title>Transcriptional coregulator SNURF (RNF4) possesses ubiquitin E3 ligase activity.</title>
        <authorList>
            <person name="Haekli M."/>
            <person name="Lorick K.L."/>
            <person name="Weissman A.M."/>
            <person name="Jaenne O.A."/>
            <person name="Palvimo J.J."/>
        </authorList>
    </citation>
    <scope>FUNCTION</scope>
    <scope>AUTOUBIQUITINATION</scope>
    <scope>MUTAGENESIS OF CYS-136; CYS-139; CYS-177 AND CYS-180</scope>
</reference>
<reference key="6">
    <citation type="journal article" date="2005" name="Exp. Cell Res.">
        <title>SUMO-1 promotes association of SNURF (RNF4) with PML nuclear bodies.</title>
        <authorList>
            <person name="Haekli M."/>
            <person name="Karvonen U."/>
            <person name="Jaenne O.A."/>
            <person name="Palvimo J.J."/>
        </authorList>
    </citation>
    <scope>FUNCTION</scope>
    <scope>SUMOYLATION</scope>
    <scope>INTERACTION WITH PML</scope>
</reference>
<reference key="7">
    <citation type="journal article" date="2008" name="Nat. Cell Biol.">
        <title>RNF4 is a poly-SUMO-specific E3 ubiquitin ligase required for arsenic-induced PML degradation.</title>
        <authorList>
            <person name="Tatham M.H."/>
            <person name="Geoffroy M.C."/>
            <person name="Shen L."/>
            <person name="Plechanovova A."/>
            <person name="Hattersley N."/>
            <person name="Jaffray E.G."/>
            <person name="Palvimo J.J."/>
            <person name="Hay R.T."/>
        </authorList>
    </citation>
    <scope>FUNCTION</scope>
    <scope>CATALYTIC ACTIVITY</scope>
    <scope>MUTAGENESIS OF 40-ILE--VAL-43; 50-ILE--ASP-53; 61-VAL--VAL-63 AND 71-VAL--VAL-74</scope>
</reference>
<reference key="8">
    <citation type="journal article" date="2010" name="Mol. Biol. Cell">
        <title>Arsenic-induced SUMO-dependent recruitment of RNF4 into PML nuclear bodies.</title>
        <authorList>
            <person name="Geoffroy M.C."/>
            <person name="Jaffray E.G."/>
            <person name="Walker K.J."/>
            <person name="Hay R.T."/>
        </authorList>
    </citation>
    <scope>FUNCTION</scope>
    <scope>INTERACTION WITH SUMOYLATED PML</scope>
    <scope>SUBCELLULAR LOCATION</scope>
</reference>
<reference key="9">
    <citation type="journal article" date="2012" name="Nat. Commun.">
        <title>Quantitative maps of protein phosphorylation sites across 14 different rat organs and tissues.</title>
        <authorList>
            <person name="Lundby A."/>
            <person name="Secher A."/>
            <person name="Lage K."/>
            <person name="Nordsborg N.B."/>
            <person name="Dmytriyev A."/>
            <person name="Lundby C."/>
            <person name="Olsen J.V."/>
        </authorList>
    </citation>
    <scope>PHOSPHORYLATION [LARGE SCALE ANALYSIS] AT SER-98 AND SER-99</scope>
    <scope>IDENTIFICATION BY MASS SPECTROMETRY [LARGE SCALE ANALYSIS]</scope>
</reference>
<reference key="10">
    <citation type="journal article" date="2010" name="Biochem. J.">
        <title>RING domain dimerization is essential for RNF4 function.</title>
        <authorList>
            <person name="Liew C.W."/>
            <person name="Sun H."/>
            <person name="Hunter T."/>
            <person name="Day C.L."/>
        </authorList>
    </citation>
    <scope>X-RAY CRYSTALLOGRAPHY (1.8 ANGSTROMS) OF 124-194 IN COMPLEX WITH ZINC IONS</scope>
    <scope>DOMAIN</scope>
    <scope>SUBUNIT</scope>
</reference>
<keyword id="KW-0002">3D-structure</keyword>
<keyword id="KW-0010">Activator</keyword>
<keyword id="KW-0963">Cytoplasm</keyword>
<keyword id="KW-0238">DNA-binding</keyword>
<keyword id="KW-0479">Metal-binding</keyword>
<keyword id="KW-0539">Nucleus</keyword>
<keyword id="KW-0597">Phosphoprotein</keyword>
<keyword id="KW-1185">Reference proteome</keyword>
<keyword id="KW-0804">Transcription</keyword>
<keyword id="KW-0805">Transcription regulation</keyword>
<keyword id="KW-0808">Transferase</keyword>
<keyword id="KW-0832">Ubl conjugation</keyword>
<keyword id="KW-0833">Ubl conjugation pathway</keyword>
<keyword id="KW-0862">Zinc</keyword>
<keyword id="KW-0863">Zinc-finger</keyword>
<comment type="function">
    <text evidence="1 5 6 7 8 10 11">E3 ubiquitin-protein ligase which binds polysumoylated chains covalently attached to proteins and mediates 'Lys-6'-, 'Lys-11'-, 'Lys-48'- and 'Lys-63'-linked polyubiquitination of those substrates and their subsequent targeting to the proteasome for degradation (PubMed:14987998, PubMed:15707587, PubMed:18408734). Regulates the degradation of several proteins including PML and the transcriptional activator PEA3 (PubMed:15707587, PubMed:20943951). Involved in chromosome alignment and spindle assembly, it regulates the kinetochore CENPH-CENPI-CENPK complex by targeting polysumoylated CENPI to proteasomal degradation (By similarity). Regulates the cellular responses to hypoxia and heat shock through degradation of respectively EPAS1 and PARP1 (By similarity). Alternatively, it may also bind DNA/nucleosomes and have a more direct role in the regulation of transcription for instance enhancing basal transcription and steroid receptor-mediated transcriptional activation (PubMed:11319220, PubMed:9710597). Catalyzes ubiquitination of sumoylated PARP1 in response to PARP1 trapping to chromatin, leading to PARP1 removal from chromatin by VCP/p97 (By similarity).</text>
</comment>
<comment type="catalytic activity">
    <reaction evidence="8">
        <text>S-ubiquitinyl-[E2 ubiquitin-conjugating enzyme]-L-cysteine + [acceptor protein]-L-lysine = [E2 ubiquitin-conjugating enzyme]-L-cysteine + N(6)-ubiquitinyl-[acceptor protein]-L-lysine.</text>
        <dbReference type="EC" id="2.3.2.27"/>
    </reaction>
</comment>
<comment type="pathway">
    <text evidence="8">Protein modification; protein ubiquitination.</text>
</comment>
<comment type="subunit">
    <text evidence="1 2 7 9 10 11">Homodimer (via RING-type zinc finger domain) (PubMed:20681948). Interacts with GSC2 (By similarity). Interacts with AR/the androgen receptor and TBP (PubMed:9710597). Interacts with TCF20 (By similarity). Interacts with PATZ1. Interacts with TRPS1; negatively regulates TRPS1 transcriptional repressor activity. Interacts with PML (isoform PML-1, isoform PML-2, isoform PML-3, isoform PML-4, isoform PML-5 and isoform PML-6) (PubMed:15707587, PubMed:20943951). Interacts with PRDM1/Blimp-1 (By similarity).</text>
</comment>
<comment type="interaction">
    <interactant intactId="EBI-7258907">
        <id>O88846</id>
    </interactant>
    <interactant intactId="EBI-7258907">
        <id>O88846</id>
        <label>Rnf4</label>
    </interactant>
    <organismsDiffer>false</organismsDiffer>
    <experiments>4</experiments>
</comment>
<comment type="interaction">
    <interactant intactId="EBI-7258907">
        <id>O88846</id>
    </interactant>
    <interactant intactId="EBI-1048805">
        <id>P27695</id>
        <label>APEX1</label>
    </interactant>
    <organismsDiffer>true</organismsDiffer>
    <experiments>2</experiments>
</comment>
<comment type="interaction">
    <interactant intactId="EBI-7258907">
        <id>O88846</id>
    </interactant>
    <interactant intactId="EBI-473220">
        <id>P61956</id>
        <label>SUMO2</label>
    </interactant>
    <organismsDiffer>true</organismsDiffer>
    <experiments>2</experiments>
</comment>
<comment type="interaction">
    <interactant intactId="EBI-7258907">
        <id>O88846</id>
    </interactant>
    <interactant intactId="EBI-348333">
        <id>Q13569</id>
        <label>TDG</label>
    </interactant>
    <organismsDiffer>true</organismsDiffer>
    <experiments>2</experiments>
</comment>
<comment type="interaction">
    <interactant intactId="EBI-7258907">
        <id>O88846</id>
    </interactant>
    <interactant intactId="EBI-743540">
        <id>P51668</id>
        <label>UBE2D1</label>
    </interactant>
    <organismsDiffer>true</organismsDiffer>
    <experiments>4</experiments>
</comment>
<comment type="subcellular location">
    <subcellularLocation>
        <location evidence="1">Cytoplasm</location>
    </subcellularLocation>
    <subcellularLocation>
        <location evidence="5 11">Nucleus</location>
    </subcellularLocation>
    <subcellularLocation>
        <location evidence="10">Nucleus</location>
        <location evidence="10">Nucleoplasm</location>
    </subcellularLocation>
    <subcellularLocation>
        <location evidence="10">Nucleus</location>
        <location evidence="10">PML body</location>
    </subcellularLocation>
</comment>
<comment type="tissue specificity">
    <text evidence="11">Widely expressed with highest levels in testis.</text>
</comment>
<comment type="domain">
    <text evidence="9">The RING-type zinc finger domain is required for the ubiquitination of polysumoylated substrates.</text>
</comment>
<comment type="domain">
    <text evidence="8">The SUMO interaction motifs (SIMs) mediates the binding to polysumoylated substrate.</text>
</comment>
<comment type="PTM">
    <text evidence="7">Sumoylated; conjugated by one or two SUMO1 moieties.</text>
</comment>
<comment type="PTM">
    <text evidence="6">Autoubiquitinated.</text>
</comment>
<sequence>MSTRNPQRKRRGGAVNSRQTQKRTRETTSTPEISLEAEPIELVETVGDEIVDLTCESLEPVVVDLTHNDSVVIVEERRRPRRNGRRLRQDHADSCVVSSDDEELSKDKDVYVTTHTPRSTKDEGTTGLRPSGTVSCPICMDGYSEIVQNGRLIVSTECGHVFCSQCLRDSLKNANTCPTCRKKINHKRYHPIYI</sequence>
<gene>
    <name evidence="13 15" type="primary">Rnf4</name>
    <name evidence="12" type="synonym">Snurf</name>
</gene>
<name>RNF4_RAT</name>
<organism>
    <name type="scientific">Rattus norvegicus</name>
    <name type="common">Rat</name>
    <dbReference type="NCBI Taxonomy" id="10116"/>
    <lineage>
        <taxon>Eukaryota</taxon>
        <taxon>Metazoa</taxon>
        <taxon>Chordata</taxon>
        <taxon>Craniata</taxon>
        <taxon>Vertebrata</taxon>
        <taxon>Euteleostomi</taxon>
        <taxon>Mammalia</taxon>
        <taxon>Eutheria</taxon>
        <taxon>Euarchontoglires</taxon>
        <taxon>Glires</taxon>
        <taxon>Rodentia</taxon>
        <taxon>Myomorpha</taxon>
        <taxon>Muroidea</taxon>
        <taxon>Muridae</taxon>
        <taxon>Murinae</taxon>
        <taxon>Rattus</taxon>
    </lineage>
</organism>
<dbReference type="EC" id="2.3.2.27" evidence="8"/>
<dbReference type="EMBL" id="AF022081">
    <property type="protein sequence ID" value="AAC35248.1"/>
    <property type="molecule type" value="mRNA"/>
</dbReference>
<dbReference type="EMBL" id="AY050655">
    <property type="protein sequence ID" value="AAL06715.1"/>
    <property type="molecule type" value="mRNA"/>
</dbReference>
<dbReference type="EMBL" id="BC062024">
    <property type="protein sequence ID" value="AAH62024.1"/>
    <property type="molecule type" value="mRNA"/>
</dbReference>
<dbReference type="RefSeq" id="NP_062055.1">
    <property type="nucleotide sequence ID" value="NM_019182.2"/>
</dbReference>
<dbReference type="RefSeq" id="XP_008768493.1">
    <property type="nucleotide sequence ID" value="XM_008770271.2"/>
</dbReference>
<dbReference type="RefSeq" id="XP_008768494.1">
    <property type="nucleotide sequence ID" value="XM_008770272.2"/>
</dbReference>
<dbReference type="RefSeq" id="XP_008768495.1">
    <property type="nucleotide sequence ID" value="XM_008770273.2"/>
</dbReference>
<dbReference type="RefSeq" id="XP_017454634.1">
    <property type="nucleotide sequence ID" value="XM_017599145.1"/>
</dbReference>
<dbReference type="RefSeq" id="XP_017454635.1">
    <property type="nucleotide sequence ID" value="XM_017599146.1"/>
</dbReference>
<dbReference type="PDB" id="3NG2">
    <property type="method" value="X-ray"/>
    <property type="resolution" value="1.80 A"/>
    <property type="chains" value="A/B=124-194"/>
</dbReference>
<dbReference type="PDB" id="4AP4">
    <property type="method" value="X-ray"/>
    <property type="resolution" value="2.21 A"/>
    <property type="chains" value="A=131-194"/>
</dbReference>
<dbReference type="PDB" id="5AIT">
    <property type="method" value="X-ray"/>
    <property type="resolution" value="3.40 A"/>
    <property type="chains" value="A=131-194"/>
</dbReference>
<dbReference type="PDB" id="5AIU">
    <property type="method" value="X-ray"/>
    <property type="resolution" value="2.21 A"/>
    <property type="chains" value="A=131-194"/>
</dbReference>
<dbReference type="PDBsum" id="3NG2"/>
<dbReference type="PDBsum" id="4AP4"/>
<dbReference type="PDBsum" id="5AIT"/>
<dbReference type="PDBsum" id="5AIU"/>
<dbReference type="BMRB" id="O88846"/>
<dbReference type="SMR" id="O88846"/>
<dbReference type="BioGRID" id="247945">
    <property type="interactions" value="13"/>
</dbReference>
<dbReference type="FunCoup" id="O88846">
    <property type="interactions" value="2919"/>
</dbReference>
<dbReference type="IntAct" id="O88846">
    <property type="interactions" value="12"/>
</dbReference>
<dbReference type="MINT" id="O88846"/>
<dbReference type="STRING" id="10116.ENSRNOP00000074121"/>
<dbReference type="iPTMnet" id="O88846"/>
<dbReference type="PhosphoSitePlus" id="O88846"/>
<dbReference type="PaxDb" id="10116-ENSRNOP00000019555"/>
<dbReference type="Ensembl" id="ENSRNOT00000095762.1">
    <property type="protein sequence ID" value="ENSRNOP00000096496.1"/>
    <property type="gene ID" value="ENSRNOG00000013930.8"/>
</dbReference>
<dbReference type="GeneID" id="29274"/>
<dbReference type="KEGG" id="rno:29274"/>
<dbReference type="AGR" id="RGD:3583"/>
<dbReference type="CTD" id="6047"/>
<dbReference type="RGD" id="3583">
    <property type="gene designation" value="Rnf4"/>
</dbReference>
<dbReference type="eggNOG" id="KOG0320">
    <property type="taxonomic scope" value="Eukaryota"/>
</dbReference>
<dbReference type="GeneTree" id="ENSGT00390000010318"/>
<dbReference type="HOGENOM" id="CLU_106856_0_0_1"/>
<dbReference type="InParanoid" id="O88846"/>
<dbReference type="OrthoDB" id="73551at9989"/>
<dbReference type="PhylomeDB" id="O88846"/>
<dbReference type="TreeFam" id="TF328387"/>
<dbReference type="BRENDA" id="2.3.2.27">
    <property type="organism ID" value="5301"/>
</dbReference>
<dbReference type="Reactome" id="R-RNO-983168">
    <property type="pathway name" value="Antigen processing: Ubiquitination &amp; Proteasome degradation"/>
</dbReference>
<dbReference type="UniPathway" id="UPA00143"/>
<dbReference type="EvolutionaryTrace" id="O88846"/>
<dbReference type="PRO" id="PR:O88846"/>
<dbReference type="Proteomes" id="UP000002494">
    <property type="component" value="Chromosome 14"/>
</dbReference>
<dbReference type="Bgee" id="ENSRNOG00000013930">
    <property type="expression patterns" value="Expressed in testis and 19 other cell types or tissues"/>
</dbReference>
<dbReference type="ExpressionAtlas" id="O88846">
    <property type="expression patterns" value="baseline and differential"/>
</dbReference>
<dbReference type="GO" id="GO:0005737">
    <property type="term" value="C:cytoplasm"/>
    <property type="evidence" value="ECO:0000250"/>
    <property type="project" value="UniProtKB"/>
</dbReference>
<dbReference type="GO" id="GO:0005654">
    <property type="term" value="C:nucleoplasm"/>
    <property type="evidence" value="ECO:0000314"/>
    <property type="project" value="UniProtKB"/>
</dbReference>
<dbReference type="GO" id="GO:0005634">
    <property type="term" value="C:nucleus"/>
    <property type="evidence" value="ECO:0000314"/>
    <property type="project" value="UniProtKB"/>
</dbReference>
<dbReference type="GO" id="GO:0016605">
    <property type="term" value="C:PML body"/>
    <property type="evidence" value="ECO:0000266"/>
    <property type="project" value="RGD"/>
</dbReference>
<dbReference type="GO" id="GO:0003677">
    <property type="term" value="F:DNA binding"/>
    <property type="evidence" value="ECO:0000314"/>
    <property type="project" value="UniProtKB"/>
</dbReference>
<dbReference type="GO" id="GO:0042802">
    <property type="term" value="F:identical protein binding"/>
    <property type="evidence" value="ECO:0000353"/>
    <property type="project" value="IntAct"/>
</dbReference>
<dbReference type="GO" id="GO:0050681">
    <property type="term" value="F:nuclear androgen receptor binding"/>
    <property type="evidence" value="ECO:0000353"/>
    <property type="project" value="RGD"/>
</dbReference>
<dbReference type="GO" id="GO:0030331">
    <property type="term" value="F:nuclear estrogen receptor binding"/>
    <property type="evidence" value="ECO:0000353"/>
    <property type="project" value="RGD"/>
</dbReference>
<dbReference type="GO" id="GO:0031491">
    <property type="term" value="F:nucleosome binding"/>
    <property type="evidence" value="ECO:0000314"/>
    <property type="project" value="UniProtKB"/>
</dbReference>
<dbReference type="GO" id="GO:0032184">
    <property type="term" value="F:SUMO polymer binding"/>
    <property type="evidence" value="ECO:0000314"/>
    <property type="project" value="RGD"/>
</dbReference>
<dbReference type="GO" id="GO:0017025">
    <property type="term" value="F:TBP-class protein binding"/>
    <property type="evidence" value="ECO:0000314"/>
    <property type="project" value="RGD"/>
</dbReference>
<dbReference type="GO" id="GO:0031624">
    <property type="term" value="F:ubiquitin conjugating enzyme binding"/>
    <property type="evidence" value="ECO:0000353"/>
    <property type="project" value="RGD"/>
</dbReference>
<dbReference type="GO" id="GO:0061630">
    <property type="term" value="F:ubiquitin protein ligase activity"/>
    <property type="evidence" value="ECO:0000314"/>
    <property type="project" value="RGD"/>
</dbReference>
<dbReference type="GO" id="GO:0004842">
    <property type="term" value="F:ubiquitin-protein transferase activity"/>
    <property type="evidence" value="ECO:0000314"/>
    <property type="project" value="UniProtKB"/>
</dbReference>
<dbReference type="GO" id="GO:0008270">
    <property type="term" value="F:zinc ion binding"/>
    <property type="evidence" value="ECO:0000314"/>
    <property type="project" value="RGD"/>
</dbReference>
<dbReference type="GO" id="GO:0071243">
    <property type="term" value="P:cellular response to arsenic-containing substance"/>
    <property type="evidence" value="ECO:0000270"/>
    <property type="project" value="RGD"/>
</dbReference>
<dbReference type="GO" id="GO:0071345">
    <property type="term" value="P:cellular response to cytokine stimulus"/>
    <property type="evidence" value="ECO:0000270"/>
    <property type="project" value="RGD"/>
</dbReference>
<dbReference type="GO" id="GO:0071480">
    <property type="term" value="P:cellular response to gamma radiation"/>
    <property type="evidence" value="ECO:0000315"/>
    <property type="project" value="RGD"/>
</dbReference>
<dbReference type="GO" id="GO:0072711">
    <property type="term" value="P:cellular response to hydroxyurea"/>
    <property type="evidence" value="ECO:0000315"/>
    <property type="project" value="RGD"/>
</dbReference>
<dbReference type="GO" id="GO:0071394">
    <property type="term" value="P:cellular response to testosterone stimulus"/>
    <property type="evidence" value="ECO:0000314"/>
    <property type="project" value="RGD"/>
</dbReference>
<dbReference type="GO" id="GO:0008584">
    <property type="term" value="P:male gonad development"/>
    <property type="evidence" value="ECO:0000270"/>
    <property type="project" value="RGD"/>
</dbReference>
<dbReference type="GO" id="GO:0120186">
    <property type="term" value="P:negative regulation of protein localization to chromatin"/>
    <property type="evidence" value="ECO:0000266"/>
    <property type="project" value="RGD"/>
</dbReference>
<dbReference type="GO" id="GO:0045893">
    <property type="term" value="P:positive regulation of DNA-templated transcription"/>
    <property type="evidence" value="ECO:0000314"/>
    <property type="project" value="UniProtKB"/>
</dbReference>
<dbReference type="GO" id="GO:0045944">
    <property type="term" value="P:positive regulation of transcription by RNA polymerase II"/>
    <property type="evidence" value="ECO:0000314"/>
    <property type="project" value="RGD"/>
</dbReference>
<dbReference type="GO" id="GO:0043161">
    <property type="term" value="P:proteasome-mediated ubiquitin-dependent protein catabolic process"/>
    <property type="evidence" value="ECO:0000250"/>
    <property type="project" value="UniProtKB"/>
</dbReference>
<dbReference type="GO" id="GO:0051865">
    <property type="term" value="P:protein autoubiquitination"/>
    <property type="evidence" value="ECO:0000314"/>
    <property type="project" value="RGD"/>
</dbReference>
<dbReference type="GO" id="GO:0070979">
    <property type="term" value="P:protein K11-linked ubiquitination"/>
    <property type="evidence" value="ECO:0000314"/>
    <property type="project" value="UniProtKB"/>
</dbReference>
<dbReference type="GO" id="GO:0070936">
    <property type="term" value="P:protein K48-linked ubiquitination"/>
    <property type="evidence" value="ECO:0000314"/>
    <property type="project" value="UniProtKB"/>
</dbReference>
<dbReference type="GO" id="GO:0085020">
    <property type="term" value="P:protein K6-linked ubiquitination"/>
    <property type="evidence" value="ECO:0000314"/>
    <property type="project" value="UniProtKB"/>
</dbReference>
<dbReference type="GO" id="GO:0070534">
    <property type="term" value="P:protein K63-linked ubiquitination"/>
    <property type="evidence" value="ECO:0000314"/>
    <property type="project" value="UniProtKB"/>
</dbReference>
<dbReference type="GO" id="GO:0016567">
    <property type="term" value="P:protein ubiquitination"/>
    <property type="evidence" value="ECO:0000315"/>
    <property type="project" value="UniProtKB"/>
</dbReference>
<dbReference type="GO" id="GO:0090234">
    <property type="term" value="P:regulation of kinetochore assembly"/>
    <property type="evidence" value="ECO:0000250"/>
    <property type="project" value="UniProtKB"/>
</dbReference>
<dbReference type="GO" id="GO:0090169">
    <property type="term" value="P:regulation of spindle assembly"/>
    <property type="evidence" value="ECO:0000250"/>
    <property type="project" value="UniProtKB"/>
</dbReference>
<dbReference type="GO" id="GO:0046685">
    <property type="term" value="P:response to arsenic-containing substance"/>
    <property type="evidence" value="ECO:0000314"/>
    <property type="project" value="UniProtKB"/>
</dbReference>
<dbReference type="GO" id="GO:0032355">
    <property type="term" value="P:response to estradiol"/>
    <property type="evidence" value="ECO:0000270"/>
    <property type="project" value="RGD"/>
</dbReference>
<dbReference type="GO" id="GO:0044752">
    <property type="term" value="P:response to human chorionic gonadotropin"/>
    <property type="evidence" value="ECO:0000270"/>
    <property type="project" value="RGD"/>
</dbReference>
<dbReference type="GO" id="GO:0007283">
    <property type="term" value="P:spermatogenesis"/>
    <property type="evidence" value="ECO:0000270"/>
    <property type="project" value="RGD"/>
</dbReference>
<dbReference type="CDD" id="cd16533">
    <property type="entry name" value="RING-HC_RNF4"/>
    <property type="match status" value="1"/>
</dbReference>
<dbReference type="FunFam" id="3.30.40.10:FF:000173">
    <property type="entry name" value="E3 ubiquitin-protein ligase RNF4"/>
    <property type="match status" value="1"/>
</dbReference>
<dbReference type="Gene3D" id="3.30.40.10">
    <property type="entry name" value="Zinc/RING finger domain, C3HC4 (zinc finger)"/>
    <property type="match status" value="1"/>
</dbReference>
<dbReference type="InterPro" id="IPR043295">
    <property type="entry name" value="RING-HC_RNF4"/>
</dbReference>
<dbReference type="InterPro" id="IPR047134">
    <property type="entry name" value="RNF4"/>
</dbReference>
<dbReference type="InterPro" id="IPR001841">
    <property type="entry name" value="Znf_RING"/>
</dbReference>
<dbReference type="InterPro" id="IPR013083">
    <property type="entry name" value="Znf_RING/FYVE/PHD"/>
</dbReference>
<dbReference type="InterPro" id="IPR017907">
    <property type="entry name" value="Znf_RING_CS"/>
</dbReference>
<dbReference type="PANTHER" id="PTHR23041:SF78">
    <property type="entry name" value="E3 UBIQUITIN-PROTEIN LIGASE RNF4"/>
    <property type="match status" value="1"/>
</dbReference>
<dbReference type="PANTHER" id="PTHR23041">
    <property type="entry name" value="RING FINGER DOMAIN-CONTAINING"/>
    <property type="match status" value="1"/>
</dbReference>
<dbReference type="Pfam" id="PF13639">
    <property type="entry name" value="zf-RING_2"/>
    <property type="match status" value="1"/>
</dbReference>
<dbReference type="SMART" id="SM00184">
    <property type="entry name" value="RING"/>
    <property type="match status" value="1"/>
</dbReference>
<dbReference type="SUPFAM" id="SSF57850">
    <property type="entry name" value="RING/U-box"/>
    <property type="match status" value="1"/>
</dbReference>
<dbReference type="PROSITE" id="PS00518">
    <property type="entry name" value="ZF_RING_1"/>
    <property type="match status" value="1"/>
</dbReference>
<dbReference type="PROSITE" id="PS50089">
    <property type="entry name" value="ZF_RING_2"/>
    <property type="match status" value="1"/>
</dbReference>
<evidence type="ECO:0000250" key="1">
    <source>
        <dbReference type="UniProtKB" id="P78317"/>
    </source>
</evidence>
<evidence type="ECO:0000250" key="2">
    <source>
        <dbReference type="UniProtKB" id="Q9QZS2"/>
    </source>
</evidence>
<evidence type="ECO:0000255" key="3">
    <source>
        <dbReference type="PROSITE-ProRule" id="PRU00175"/>
    </source>
</evidence>
<evidence type="ECO:0000256" key="4">
    <source>
        <dbReference type="SAM" id="MobiDB-lite"/>
    </source>
</evidence>
<evidence type="ECO:0000269" key="5">
    <source>
    </source>
</evidence>
<evidence type="ECO:0000269" key="6">
    <source>
    </source>
</evidence>
<evidence type="ECO:0000269" key="7">
    <source>
    </source>
</evidence>
<evidence type="ECO:0000269" key="8">
    <source>
    </source>
</evidence>
<evidence type="ECO:0000269" key="9">
    <source>
    </source>
</evidence>
<evidence type="ECO:0000269" key="10">
    <source>
    </source>
</evidence>
<evidence type="ECO:0000269" key="11">
    <source>
    </source>
</evidence>
<evidence type="ECO:0000303" key="12">
    <source>
    </source>
</evidence>
<evidence type="ECO:0000303" key="13">
    <source ref="2"/>
</evidence>
<evidence type="ECO:0000305" key="14"/>
<evidence type="ECO:0000312" key="15">
    <source>
        <dbReference type="RGD" id="3583"/>
    </source>
</evidence>
<evidence type="ECO:0007744" key="16">
    <source>
        <dbReference type="PDB" id="3NG2"/>
    </source>
</evidence>
<evidence type="ECO:0007744" key="17">
    <source>
    </source>
</evidence>
<evidence type="ECO:0007829" key="18">
    <source>
        <dbReference type="PDB" id="3NG2"/>
    </source>
</evidence>
<evidence type="ECO:0007829" key="19">
    <source>
        <dbReference type="PDB" id="4AP4"/>
    </source>
</evidence>
<proteinExistence type="evidence at protein level"/>
<feature type="chain" id="PRO_0000056045" description="E3 ubiquitin-protein ligase RNF4">
    <location>
        <begin position="1"/>
        <end position="194"/>
    </location>
</feature>
<feature type="zinc finger region" description="RING-type" evidence="3">
    <location>
        <begin position="136"/>
        <end position="181"/>
    </location>
</feature>
<feature type="region of interest" description="Disordered" evidence="4">
    <location>
        <begin position="1"/>
        <end position="36"/>
    </location>
</feature>
<feature type="region of interest" description="Required for ubiquitination activity" evidence="2">
    <location>
        <begin position="1"/>
        <end position="20"/>
    </location>
</feature>
<feature type="region of interest" description="Mediates interaction with TRPS1" evidence="2">
    <location>
        <begin position="6"/>
        <end position="65"/>
    </location>
</feature>
<feature type="short sequence motif" description="SUMO interaction motif 1" evidence="8">
    <location>
        <begin position="40"/>
        <end position="43"/>
    </location>
</feature>
<feature type="short sequence motif" description="SUMO interaction motif 2" evidence="8">
    <location>
        <begin position="50"/>
        <end position="53"/>
    </location>
</feature>
<feature type="short sequence motif" description="SUMO interaction motif 3" evidence="8">
    <location>
        <begin position="61"/>
        <end position="63"/>
    </location>
</feature>
<feature type="short sequence motif" description="SUMO interaction motif 4" evidence="8">
    <location>
        <begin position="71"/>
        <end position="74"/>
    </location>
</feature>
<feature type="compositionally biased region" description="Basic residues" evidence="4">
    <location>
        <begin position="1"/>
        <end position="12"/>
    </location>
</feature>
<feature type="binding site" evidence="9 16">
    <location>
        <position position="136"/>
    </location>
    <ligand>
        <name>Zn(2+)</name>
        <dbReference type="ChEBI" id="CHEBI:29105"/>
        <label>1</label>
    </ligand>
</feature>
<feature type="binding site" evidence="9 16">
    <location>
        <position position="139"/>
    </location>
    <ligand>
        <name>Zn(2+)</name>
        <dbReference type="ChEBI" id="CHEBI:29105"/>
        <label>1</label>
    </ligand>
</feature>
<feature type="binding site" evidence="9 16">
    <location>
        <position position="158"/>
    </location>
    <ligand>
        <name>Zn(2+)</name>
        <dbReference type="ChEBI" id="CHEBI:29105"/>
        <label>2</label>
    </ligand>
</feature>
<feature type="binding site" evidence="9 16">
    <location>
        <position position="160"/>
    </location>
    <ligand>
        <name>Zn(2+)</name>
        <dbReference type="ChEBI" id="CHEBI:29105"/>
        <label>2</label>
    </ligand>
</feature>
<feature type="binding site" evidence="9 16">
    <location>
        <position position="163"/>
    </location>
    <ligand>
        <name>Zn(2+)</name>
        <dbReference type="ChEBI" id="CHEBI:29105"/>
        <label>1</label>
    </ligand>
</feature>
<feature type="binding site" evidence="9 16">
    <location>
        <position position="166"/>
    </location>
    <ligand>
        <name>Zn(2+)</name>
        <dbReference type="ChEBI" id="CHEBI:29105"/>
        <label>1</label>
    </ligand>
</feature>
<feature type="binding site" evidence="9 16">
    <location>
        <position position="177"/>
    </location>
    <ligand>
        <name>Zn(2+)</name>
        <dbReference type="ChEBI" id="CHEBI:29105"/>
        <label>2</label>
    </ligand>
</feature>
<feature type="binding site" evidence="9 16">
    <location>
        <position position="180"/>
    </location>
    <ligand>
        <name>Zn(2+)</name>
        <dbReference type="ChEBI" id="CHEBI:29105"/>
        <label>2</label>
    </ligand>
</feature>
<feature type="modified residue" description="Phosphoserine" evidence="17">
    <location>
        <position position="98"/>
    </location>
</feature>
<feature type="modified residue" description="Phosphoserine" evidence="17">
    <location>
        <position position="99"/>
    </location>
</feature>
<feature type="mutagenesis site" description="Altered DNA-binding activity." evidence="5">
    <original>RKRR</original>
    <variation>AAAA</variation>
    <location>
        <begin position="8"/>
        <end position="11"/>
    </location>
</feature>
<feature type="mutagenesis site" description="No effect. Loss of binding and ubiquitination of poly-SUMO chains; when associated with 50-A--A-53; 61-A--A-63 and 71-A--A-74." evidence="8">
    <original>IELV</original>
    <variation>AEAA</variation>
    <location>
        <begin position="40"/>
        <end position="43"/>
    </location>
</feature>
<feature type="mutagenesis site" description="Alters binding to poly-SUMO chains. Loss of binding and ubiquitination of poly-SUMO chains; when associated with 40-A--A-43; 61-A--A-63 and 71-A--A-74." evidence="8">
    <original>IVDL</original>
    <variation>AADA</variation>
    <location>
        <begin position="50"/>
        <end position="53"/>
    </location>
</feature>
<feature type="mutagenesis site" description="No effect. Loss of binding and ubiquitination of poly-SUMO chains; when associated with 40-A--A-43; 50-A--A-53 and 71-A--A-74." evidence="8">
    <original>VVV</original>
    <variation>AAA</variation>
    <location>
        <begin position="61"/>
        <end position="63"/>
    </location>
</feature>
<feature type="mutagenesis site" description="No effect. Loss of binding and ubiquitination of poly-SUMO chains; when associated with 40-A--A-43; 50-A--A-53 and 61-A--A-63." evidence="8">
    <original>VVIV</original>
    <variation>AAAA</variation>
    <location>
        <begin position="71"/>
        <end position="74"/>
    </location>
</feature>
<feature type="mutagenesis site" description="Loss of ubiquitination activity; when associated with S-139." evidence="6">
    <original>C</original>
    <variation>S</variation>
    <location>
        <position position="136"/>
    </location>
</feature>
<feature type="mutagenesis site" description="Loss of ubiquitination activity; when associated with S-136." evidence="6">
    <original>C</original>
    <variation>S</variation>
    <location>
        <position position="139"/>
    </location>
</feature>
<feature type="mutagenesis site" description="Loss of ubiquitination activity; when associated with S-180." evidence="6">
    <original>C</original>
    <variation>S</variation>
    <location>
        <position position="177"/>
    </location>
</feature>
<feature type="mutagenesis site" description="Loss of ubiquitination activity; when associated with S-177." evidence="6">
    <original>C</original>
    <variation>S</variation>
    <location>
        <position position="180"/>
    </location>
</feature>
<feature type="turn" evidence="18">
    <location>
        <begin position="137"/>
        <end position="139"/>
    </location>
</feature>
<feature type="helix" evidence="18">
    <location>
        <begin position="143"/>
        <end position="147"/>
    </location>
</feature>
<feature type="turn" evidence="18">
    <location>
        <begin position="148"/>
        <end position="150"/>
    </location>
</feature>
<feature type="strand" evidence="18">
    <location>
        <begin position="153"/>
        <end position="155"/>
    </location>
</feature>
<feature type="strand" evidence="18">
    <location>
        <begin position="161"/>
        <end position="163"/>
    </location>
</feature>
<feature type="helix" evidence="18">
    <location>
        <begin position="164"/>
        <end position="173"/>
    </location>
</feature>
<feature type="turn" evidence="18">
    <location>
        <begin position="178"/>
        <end position="180"/>
    </location>
</feature>
<feature type="strand" evidence="19">
    <location>
        <begin position="189"/>
        <end position="192"/>
    </location>
</feature>
<protein>
    <recommendedName>
        <fullName evidence="14">E3 ubiquitin-protein ligase RNF4</fullName>
        <ecNumber evidence="8">2.3.2.27</ecNumber>
    </recommendedName>
    <alternativeName>
        <fullName evidence="14">RING finger protein 4</fullName>
    </alternativeName>
    <alternativeName>
        <fullName evidence="12">Small nuclear ring finger protein</fullName>
        <shortName evidence="12">Protein SNURF</shortName>
    </alternativeName>
</protein>